<protein>
    <recommendedName>
        <fullName>Apolipoprotein M</fullName>
        <shortName>Apo-M</shortName>
        <shortName>ApoM</shortName>
    </recommendedName>
    <alternativeName>
        <fullName>Protein Px</fullName>
    </alternativeName>
</protein>
<proteinExistence type="evidence at protein level"/>
<reference key="1">
    <citation type="submission" date="1999-11" db="EMBL/GenBank/DDBJ databases">
        <authorList>
            <person name="Xu N."/>
            <person name="Dahlbaeck B."/>
        </authorList>
    </citation>
    <scope>NUCLEOTIDE SEQUENCE [MRNA]</scope>
    <source>
        <strain>Sprague-Dawley</strain>
        <tissue>Liver</tissue>
    </source>
</reference>
<reference key="2">
    <citation type="journal article" date="2004" name="Genome Res.">
        <title>The genomic sequence and comparative analysis of the rat major histocompatibility complex.</title>
        <authorList>
            <person name="Hurt P."/>
            <person name="Walter L."/>
            <person name="Sudbrak R."/>
            <person name="Klages S."/>
            <person name="Mueller I."/>
            <person name="Shiina T."/>
            <person name="Inoko H."/>
            <person name="Lehrach H."/>
            <person name="Guenther E."/>
            <person name="Reinhardt R."/>
            <person name="Himmelbauer H."/>
        </authorList>
    </citation>
    <scope>NUCLEOTIDE SEQUENCE [LARGE SCALE GENOMIC DNA]</scope>
    <source>
        <strain>Brown Norway</strain>
    </source>
</reference>
<reference key="3">
    <citation type="journal article" date="2004" name="Genome Res.">
        <title>The status, quality, and expansion of the NIH full-length cDNA project: the Mammalian Gene Collection (MGC).</title>
        <authorList>
            <consortium name="The MGC Project Team"/>
        </authorList>
    </citation>
    <scope>NUCLEOTIDE SEQUENCE [LARGE SCALE MRNA]</scope>
    <source>
        <tissue>Liver</tissue>
    </source>
</reference>
<reference key="4">
    <citation type="journal article" date="1990" name="Biochim. Biophys. Acta">
        <title>A novel high-density lipoprotein particle and associated protein in rat plasma.</title>
        <authorList>
            <person name="Blatter M.-C."/>
            <person name="James R.W."/>
            <person name="Borghini I."/>
            <person name="Martin B.M."/>
            <person name="Hochstrasser A.-C."/>
            <person name="Pometta D."/>
        </authorList>
    </citation>
    <scope>PROTEIN SEQUENCE OF 18-33</scope>
</reference>
<feature type="signal peptide" evidence="4">
    <location>
        <begin position="1"/>
        <end position="17"/>
    </location>
</feature>
<feature type="chain" id="PRO_0000017877" description="Apolipoprotein M">
    <location>
        <begin position="18"/>
        <end position="190"/>
    </location>
</feature>
<feature type="binding site" evidence="2">
    <location>
        <position position="138"/>
    </location>
    <ligand>
        <name>tetradecanoate</name>
        <dbReference type="ChEBI" id="CHEBI:30807"/>
    </ligand>
</feature>
<feature type="binding site" evidence="2">
    <location>
        <position position="145"/>
    </location>
    <ligand>
        <name>tetradecanoate</name>
        <dbReference type="ChEBI" id="CHEBI:30807"/>
    </ligand>
</feature>
<feature type="disulfide bond" evidence="1">
    <location>
        <begin position="23"/>
        <end position="169"/>
    </location>
</feature>
<feature type="disulfide bond" evidence="1">
    <location>
        <begin position="95"/>
        <end position="185"/>
    </location>
</feature>
<feature type="disulfide bond" evidence="1">
    <location>
        <begin position="130"/>
        <end position="159"/>
    </location>
</feature>
<feature type="sequence conflict" description="In Ref. 4; AA sequence." evidence="5" ref="4">
    <original>M</original>
    <variation>T</variation>
    <location>
        <position position="30"/>
    </location>
</feature>
<organism>
    <name type="scientific">Rattus norvegicus</name>
    <name type="common">Rat</name>
    <dbReference type="NCBI Taxonomy" id="10116"/>
    <lineage>
        <taxon>Eukaryota</taxon>
        <taxon>Metazoa</taxon>
        <taxon>Chordata</taxon>
        <taxon>Craniata</taxon>
        <taxon>Vertebrata</taxon>
        <taxon>Euteleostomi</taxon>
        <taxon>Mammalia</taxon>
        <taxon>Eutheria</taxon>
        <taxon>Euarchontoglires</taxon>
        <taxon>Glires</taxon>
        <taxon>Rodentia</taxon>
        <taxon>Myomorpha</taxon>
        <taxon>Muroidea</taxon>
        <taxon>Muridae</taxon>
        <taxon>Murinae</taxon>
        <taxon>Rattus</taxon>
    </lineage>
</organism>
<keyword id="KW-0903">Direct protein sequencing</keyword>
<keyword id="KW-1015">Disulfide bond</keyword>
<keyword id="KW-0345">HDL</keyword>
<keyword id="KW-0445">Lipid transport</keyword>
<keyword id="KW-1185">Reference proteome</keyword>
<keyword id="KW-0964">Secreted</keyword>
<keyword id="KW-0732">Signal</keyword>
<keyword id="KW-0813">Transport</keyword>
<accession>P14630</accession>
<accession>Q5EBB9</accession>
<accession>Q9QXI9</accession>
<comment type="function">
    <text evidence="1">Probably involved in lipid transport. Can bind sphingosine-1-phosphate, myristic acid, palmitic acid and stearic acid, retinol, all-trans-retinoic acid and 9-cis-retinoic acid (By similarity).</text>
</comment>
<comment type="subunit">
    <text evidence="3">Interacts with LRP2; LRP2 mediates APOM renal uptake and subsequent lysosomal degradation.</text>
</comment>
<comment type="subcellular location">
    <subcellularLocation>
        <location>Secreted</location>
    </subcellularLocation>
    <text>Associated with HDL.</text>
</comment>
<comment type="tissue specificity">
    <text>Expressed by the liver; secreted in plasma.</text>
</comment>
<comment type="similarity">
    <text evidence="5">Belongs to the calycin superfamily. Lipocalin family. Highly divergent.</text>
</comment>
<evidence type="ECO:0000250" key="1"/>
<evidence type="ECO:0000250" key="2">
    <source>
        <dbReference type="UniProtKB" id="O95445"/>
    </source>
</evidence>
<evidence type="ECO:0000250" key="3">
    <source>
        <dbReference type="UniProtKB" id="Q9Z1R3"/>
    </source>
</evidence>
<evidence type="ECO:0000269" key="4">
    <source>
    </source>
</evidence>
<evidence type="ECO:0000305" key="5"/>
<gene>
    <name type="primary">Apom</name>
</gene>
<name>APOM_RAT</name>
<sequence>MFHQVWAALLYLYGLLFNSMNQCPEHSQLMTLGMDDKETPEPHLGLWYFIAGAAPTMEELATFDQVDNIVFNMAAGSAPRQLQLRATIRTKNGVCVPRKWTYHLTEGKGNTELRTEGRPDMKTDLFSISCPGGIMLKETGQGYQRFLLYNRSPHPPEECVEEFQSLTSCLDFKAFLVTPRNQEACPLSSK</sequence>
<dbReference type="EMBL" id="AF207821">
    <property type="protein sequence ID" value="AAF23408.1"/>
    <property type="molecule type" value="mRNA"/>
</dbReference>
<dbReference type="EMBL" id="BX883045">
    <property type="protein sequence ID" value="CAE83996.1"/>
    <property type="molecule type" value="Genomic_DNA"/>
</dbReference>
<dbReference type="EMBL" id="BC089807">
    <property type="protein sequence ID" value="AAH89807.1"/>
    <property type="molecule type" value="mRNA"/>
</dbReference>
<dbReference type="RefSeq" id="NP_062246.1">
    <property type="nucleotide sequence ID" value="NM_019373.2"/>
</dbReference>
<dbReference type="SMR" id="P14630"/>
<dbReference type="FunCoup" id="P14630">
    <property type="interactions" value="19"/>
</dbReference>
<dbReference type="STRING" id="10116.ENSRNOP00000001126"/>
<dbReference type="PhosphoSitePlus" id="P14630"/>
<dbReference type="SwissPalm" id="P14630"/>
<dbReference type="PaxDb" id="10116-ENSRNOP00000001126"/>
<dbReference type="GeneID" id="55939"/>
<dbReference type="KEGG" id="rno:55939"/>
<dbReference type="UCSC" id="RGD:620773">
    <property type="organism name" value="rat"/>
</dbReference>
<dbReference type="AGR" id="RGD:620773"/>
<dbReference type="CTD" id="55937"/>
<dbReference type="RGD" id="620773">
    <property type="gene designation" value="Apom"/>
</dbReference>
<dbReference type="VEuPathDB" id="HostDB:ENSRNOG00000000850"/>
<dbReference type="eggNOG" id="ENOG502S2IN">
    <property type="taxonomic scope" value="Eukaryota"/>
</dbReference>
<dbReference type="HOGENOM" id="CLU_105274_0_0_1"/>
<dbReference type="InParanoid" id="P14630"/>
<dbReference type="OrthoDB" id="40133at9989"/>
<dbReference type="PhylomeDB" id="P14630"/>
<dbReference type="TreeFam" id="TF330771"/>
<dbReference type="Reactome" id="R-RNO-975634">
    <property type="pathway name" value="Retinoid metabolism and transport"/>
</dbReference>
<dbReference type="PRO" id="PR:P14630"/>
<dbReference type="Proteomes" id="UP000002494">
    <property type="component" value="Chromosome 20"/>
</dbReference>
<dbReference type="Bgee" id="ENSRNOG00000000850">
    <property type="expression patterns" value="Expressed in adult mammalian kidney and 18 other cell types or tissues"/>
</dbReference>
<dbReference type="GO" id="GO:0034365">
    <property type="term" value="C:discoidal high-density lipoprotein particle"/>
    <property type="evidence" value="ECO:0000266"/>
    <property type="project" value="RGD"/>
</dbReference>
<dbReference type="GO" id="GO:0005576">
    <property type="term" value="C:extracellular region"/>
    <property type="evidence" value="ECO:0000266"/>
    <property type="project" value="RGD"/>
</dbReference>
<dbReference type="GO" id="GO:0005615">
    <property type="term" value="C:extracellular space"/>
    <property type="evidence" value="ECO:0000314"/>
    <property type="project" value="RGD"/>
</dbReference>
<dbReference type="GO" id="GO:0034364">
    <property type="term" value="C:high-density lipoprotein particle"/>
    <property type="evidence" value="ECO:0000266"/>
    <property type="project" value="RGD"/>
</dbReference>
<dbReference type="GO" id="GO:0034362">
    <property type="term" value="C:low-density lipoprotein particle"/>
    <property type="evidence" value="ECO:0000266"/>
    <property type="project" value="RGD"/>
</dbReference>
<dbReference type="GO" id="GO:0034366">
    <property type="term" value="C:spherical high-density lipoprotein particle"/>
    <property type="evidence" value="ECO:0000266"/>
    <property type="project" value="RGD"/>
</dbReference>
<dbReference type="GO" id="GO:0034361">
    <property type="term" value="C:very-low-density lipoprotein particle"/>
    <property type="evidence" value="ECO:0000266"/>
    <property type="project" value="RGD"/>
</dbReference>
<dbReference type="GO" id="GO:0016209">
    <property type="term" value="F:antioxidant activity"/>
    <property type="evidence" value="ECO:0000266"/>
    <property type="project" value="RGD"/>
</dbReference>
<dbReference type="GO" id="GO:0005319">
    <property type="term" value="F:lipid transporter activity"/>
    <property type="evidence" value="ECO:0000266"/>
    <property type="project" value="RGD"/>
</dbReference>
<dbReference type="GO" id="GO:0005543">
    <property type="term" value="F:phospholipid binding"/>
    <property type="evidence" value="ECO:0000266"/>
    <property type="project" value="RGD"/>
</dbReference>
<dbReference type="GO" id="GO:0033344">
    <property type="term" value="P:cholesterol efflux"/>
    <property type="evidence" value="ECO:0000266"/>
    <property type="project" value="RGD"/>
</dbReference>
<dbReference type="GO" id="GO:0034380">
    <property type="term" value="P:high-density lipoprotein particle assembly"/>
    <property type="evidence" value="ECO:0000266"/>
    <property type="project" value="RGD"/>
</dbReference>
<dbReference type="GO" id="GO:0034384">
    <property type="term" value="P:high-density lipoprotein particle clearance"/>
    <property type="evidence" value="ECO:0000266"/>
    <property type="project" value="RGD"/>
</dbReference>
<dbReference type="GO" id="GO:0034375">
    <property type="term" value="P:high-density lipoprotein particle remodeling"/>
    <property type="evidence" value="ECO:0000266"/>
    <property type="project" value="RGD"/>
</dbReference>
<dbReference type="GO" id="GO:0042157">
    <property type="term" value="P:lipoprotein metabolic process"/>
    <property type="evidence" value="ECO:0000266"/>
    <property type="project" value="RGD"/>
</dbReference>
<dbReference type="GO" id="GO:0034445">
    <property type="term" value="P:negative regulation of plasma lipoprotein oxidation"/>
    <property type="evidence" value="ECO:0000266"/>
    <property type="project" value="RGD"/>
</dbReference>
<dbReference type="GO" id="GO:0009749">
    <property type="term" value="P:response to glucose"/>
    <property type="evidence" value="ECO:0000270"/>
    <property type="project" value="RGD"/>
</dbReference>
<dbReference type="GO" id="GO:0043691">
    <property type="term" value="P:reverse cholesterol transport"/>
    <property type="evidence" value="ECO:0000266"/>
    <property type="project" value="RGD"/>
</dbReference>
<dbReference type="CDD" id="cd19450">
    <property type="entry name" value="lipocalin_ApoM"/>
    <property type="match status" value="1"/>
</dbReference>
<dbReference type="FunFam" id="2.40.128.20:FF:000011">
    <property type="entry name" value="Apolipoprotein M"/>
    <property type="match status" value="1"/>
</dbReference>
<dbReference type="Gene3D" id="2.40.128.20">
    <property type="match status" value="1"/>
</dbReference>
<dbReference type="InterPro" id="IPR022734">
    <property type="entry name" value="ApoM"/>
</dbReference>
<dbReference type="InterPro" id="IPR012674">
    <property type="entry name" value="Calycin"/>
</dbReference>
<dbReference type="PANTHER" id="PTHR32028">
    <property type="entry name" value="APOLIPOPROTEIN M"/>
    <property type="match status" value="1"/>
</dbReference>
<dbReference type="PANTHER" id="PTHR32028:SF1">
    <property type="entry name" value="APOLIPOPROTEIN M"/>
    <property type="match status" value="1"/>
</dbReference>
<dbReference type="Pfam" id="PF11032">
    <property type="entry name" value="ApoM"/>
    <property type="match status" value="1"/>
</dbReference>
<dbReference type="SUPFAM" id="SSF50814">
    <property type="entry name" value="Lipocalins"/>
    <property type="match status" value="1"/>
</dbReference>